<evidence type="ECO:0000255" key="1"/>
<evidence type="ECO:0000269" key="2">
    <source>
    </source>
</evidence>
<evidence type="ECO:0000303" key="3">
    <source>
    </source>
</evidence>
<evidence type="ECO:0000305" key="4"/>
<evidence type="ECO:0007744" key="5">
    <source>
    </source>
</evidence>
<name>RCH1_YEAST</name>
<organism>
    <name type="scientific">Saccharomyces cerevisiae (strain ATCC 204508 / S288c)</name>
    <name type="common">Baker's yeast</name>
    <dbReference type="NCBI Taxonomy" id="559292"/>
    <lineage>
        <taxon>Eukaryota</taxon>
        <taxon>Fungi</taxon>
        <taxon>Dikarya</taxon>
        <taxon>Ascomycota</taxon>
        <taxon>Saccharomycotina</taxon>
        <taxon>Saccharomycetes</taxon>
        <taxon>Saccharomycetales</taxon>
        <taxon>Saccharomycetaceae</taxon>
        <taxon>Saccharomyces</taxon>
    </lineage>
</organism>
<keyword id="KW-0106">Calcium</keyword>
<keyword id="KW-0109">Calcium transport</keyword>
<keyword id="KW-1003">Cell membrane</keyword>
<keyword id="KW-0406">Ion transport</keyword>
<keyword id="KW-0472">Membrane</keyword>
<keyword id="KW-0597">Phosphoprotein</keyword>
<keyword id="KW-1185">Reference proteome</keyword>
<keyword id="KW-0812">Transmembrane</keyword>
<keyword id="KW-1133">Transmembrane helix</keyword>
<keyword id="KW-0813">Transport</keyword>
<dbReference type="EMBL" id="Z49213">
    <property type="protein sequence ID" value="CAA89150.1"/>
    <property type="molecule type" value="Genomic_DNA"/>
</dbReference>
<dbReference type="EMBL" id="AY692713">
    <property type="protein sequence ID" value="AAT92732.1"/>
    <property type="molecule type" value="Genomic_DNA"/>
</dbReference>
<dbReference type="EMBL" id="BK006946">
    <property type="protein sequence ID" value="DAA09933.1"/>
    <property type="molecule type" value="Genomic_DNA"/>
</dbReference>
<dbReference type="PIR" id="S53951">
    <property type="entry name" value="S53951"/>
</dbReference>
<dbReference type="RefSeq" id="NP_013748.1">
    <property type="nucleotide sequence ID" value="NM_001182531.1"/>
</dbReference>
<dbReference type="SMR" id="Q05131"/>
<dbReference type="BioGRID" id="35206">
    <property type="interactions" value="90"/>
</dbReference>
<dbReference type="FunCoup" id="Q05131">
    <property type="interactions" value="574"/>
</dbReference>
<dbReference type="MINT" id="Q05131"/>
<dbReference type="STRING" id="4932.YMR034C"/>
<dbReference type="iPTMnet" id="Q05131"/>
<dbReference type="PaxDb" id="4932-YMR034C"/>
<dbReference type="PeptideAtlas" id="Q05131"/>
<dbReference type="EnsemblFungi" id="YMR034C_mRNA">
    <property type="protein sequence ID" value="YMR034C"/>
    <property type="gene ID" value="YMR034C"/>
</dbReference>
<dbReference type="GeneID" id="855050"/>
<dbReference type="KEGG" id="sce:YMR034C"/>
<dbReference type="AGR" id="SGD:S000004637"/>
<dbReference type="SGD" id="S000004637">
    <property type="gene designation" value="RCH1"/>
</dbReference>
<dbReference type="VEuPathDB" id="FungiDB:YMR034C"/>
<dbReference type="eggNOG" id="KOG4821">
    <property type="taxonomic scope" value="Eukaryota"/>
</dbReference>
<dbReference type="GeneTree" id="ENSGT00390000011932"/>
<dbReference type="HOGENOM" id="CLU_039013_3_0_1"/>
<dbReference type="InParanoid" id="Q05131"/>
<dbReference type="OMA" id="LPIMIYH"/>
<dbReference type="OrthoDB" id="188035at2759"/>
<dbReference type="BioCyc" id="YEAST:G3O-32739-MONOMER"/>
<dbReference type="BioGRID-ORCS" id="855050">
    <property type="hits" value="0 hits in 10 CRISPR screens"/>
</dbReference>
<dbReference type="PRO" id="PR:Q05131"/>
<dbReference type="Proteomes" id="UP000002311">
    <property type="component" value="Chromosome XIII"/>
</dbReference>
<dbReference type="RNAct" id="Q05131">
    <property type="molecule type" value="protein"/>
</dbReference>
<dbReference type="GO" id="GO:0071944">
    <property type="term" value="C:cell periphery"/>
    <property type="evidence" value="ECO:0007005"/>
    <property type="project" value="SGD"/>
</dbReference>
<dbReference type="GO" id="GO:0005935">
    <property type="term" value="C:cellular bud neck"/>
    <property type="evidence" value="ECO:0000314"/>
    <property type="project" value="SGD"/>
</dbReference>
<dbReference type="GO" id="GO:0005886">
    <property type="term" value="C:plasma membrane"/>
    <property type="evidence" value="ECO:0000314"/>
    <property type="project" value="SGD"/>
</dbReference>
<dbReference type="GO" id="GO:0008028">
    <property type="term" value="F:monocarboxylic acid transmembrane transporter activity"/>
    <property type="evidence" value="ECO:0000247"/>
    <property type="project" value="SGD"/>
</dbReference>
<dbReference type="GO" id="GO:0006816">
    <property type="term" value="P:calcium ion transport"/>
    <property type="evidence" value="ECO:0007669"/>
    <property type="project" value="UniProtKB-KW"/>
</dbReference>
<dbReference type="GO" id="GO:0051481">
    <property type="term" value="P:negative regulation of cytosolic calcium ion concentration"/>
    <property type="evidence" value="ECO:0000316"/>
    <property type="project" value="SGD"/>
</dbReference>
<dbReference type="Gene3D" id="1.20.1530.20">
    <property type="match status" value="1"/>
</dbReference>
<dbReference type="InterPro" id="IPR038770">
    <property type="entry name" value="Na+/solute_symporter_sf"/>
</dbReference>
<dbReference type="InterPro" id="IPR016833">
    <property type="entry name" value="Put_Na-Bile_cotransptr"/>
</dbReference>
<dbReference type="PANTHER" id="PTHR18640:SF5">
    <property type="entry name" value="SODIUM_BILE ACID COTRANSPORTER 7"/>
    <property type="match status" value="1"/>
</dbReference>
<dbReference type="PANTHER" id="PTHR18640">
    <property type="entry name" value="SOLUTE CARRIER FAMILY 10 MEMBER 7"/>
    <property type="match status" value="1"/>
</dbReference>
<dbReference type="Pfam" id="PF13593">
    <property type="entry name" value="SBF_like"/>
    <property type="match status" value="1"/>
</dbReference>
<dbReference type="PIRSF" id="PIRSF026166">
    <property type="entry name" value="UCP026166"/>
    <property type="match status" value="1"/>
</dbReference>
<feature type="chain" id="PRO_0000203274" description="Solute carrier RCH1">
    <location>
        <begin position="1"/>
        <end position="434"/>
    </location>
</feature>
<feature type="topological domain" description="Cytoplasmic" evidence="1">
    <location>
        <begin position="1"/>
        <end position="15"/>
    </location>
</feature>
<feature type="transmembrane region" description="Helical" evidence="1">
    <location>
        <begin position="16"/>
        <end position="36"/>
    </location>
</feature>
<feature type="topological domain" description="Extracellular" evidence="1">
    <location>
        <begin position="37"/>
        <end position="50"/>
    </location>
</feature>
<feature type="transmembrane region" description="Helical" evidence="1">
    <location>
        <begin position="51"/>
        <end position="71"/>
    </location>
</feature>
<feature type="topological domain" description="Cytoplasmic" evidence="1">
    <location>
        <begin position="72"/>
        <end position="87"/>
    </location>
</feature>
<feature type="transmembrane region" description="Helical" evidence="1">
    <location>
        <begin position="88"/>
        <end position="108"/>
    </location>
</feature>
<feature type="topological domain" description="Extracellular" evidence="1">
    <location>
        <begin position="109"/>
        <end position="118"/>
    </location>
</feature>
<feature type="transmembrane region" description="Helical" evidence="1">
    <location>
        <begin position="119"/>
        <end position="139"/>
    </location>
</feature>
<feature type="topological domain" description="Cytoplasmic" evidence="1">
    <location>
        <begin position="140"/>
        <end position="149"/>
    </location>
</feature>
<feature type="transmembrane region" description="Helical" evidence="1">
    <location>
        <begin position="150"/>
        <end position="170"/>
    </location>
</feature>
<feature type="topological domain" description="Extracellular" evidence="1">
    <location>
        <begin position="171"/>
        <end position="199"/>
    </location>
</feature>
<feature type="transmembrane region" description="Helical" evidence="1">
    <location>
        <begin position="200"/>
        <end position="220"/>
    </location>
</feature>
<feature type="topological domain" description="Cytoplasmic" evidence="1">
    <location>
        <begin position="221"/>
        <end position="234"/>
    </location>
</feature>
<feature type="transmembrane region" description="Helical" evidence="1">
    <location>
        <begin position="235"/>
        <end position="255"/>
    </location>
</feature>
<feature type="topological domain" description="Extracellular" evidence="1">
    <location>
        <begin position="256"/>
        <end position="264"/>
    </location>
</feature>
<feature type="transmembrane region" description="Helical" evidence="1">
    <location>
        <begin position="265"/>
        <end position="285"/>
    </location>
</feature>
<feature type="topological domain" description="Cytoplasmic" evidence="1">
    <location>
        <begin position="286"/>
        <end position="327"/>
    </location>
</feature>
<feature type="transmembrane region" description="Helical" evidence="1">
    <location>
        <begin position="328"/>
        <end position="348"/>
    </location>
</feature>
<feature type="topological domain" description="Extracellular" evidence="1">
    <location>
        <begin position="349"/>
        <end position="362"/>
    </location>
</feature>
<feature type="transmembrane region" description="Helical" evidence="1">
    <location>
        <begin position="363"/>
        <end position="383"/>
    </location>
</feature>
<feature type="topological domain" description="Cytoplasmic" evidence="1">
    <location>
        <begin position="384"/>
        <end position="434"/>
    </location>
</feature>
<feature type="modified residue" description="Phosphoserine" evidence="5">
    <location>
        <position position="425"/>
    </location>
</feature>
<protein>
    <recommendedName>
        <fullName evidence="3">Solute carrier RCH1</fullName>
    </recommendedName>
    <alternativeName>
        <fullName evidence="3">Regulator of calcium homeostasis 1</fullName>
    </alternativeName>
</protein>
<gene>
    <name evidence="3" type="primary">RCH1</name>
    <name type="ordered locus">YMR034C</name>
    <name type="ORF">YM9973.08C</name>
</gene>
<proteinExistence type="evidence at protein level"/>
<reference key="1">
    <citation type="journal article" date="1997" name="Nature">
        <title>The nucleotide sequence of Saccharomyces cerevisiae chromosome XIII.</title>
        <authorList>
            <person name="Bowman S."/>
            <person name="Churcher C.M."/>
            <person name="Badcock K."/>
            <person name="Brown D."/>
            <person name="Chillingworth T."/>
            <person name="Connor R."/>
            <person name="Dedman K."/>
            <person name="Devlin K."/>
            <person name="Gentles S."/>
            <person name="Hamlin N."/>
            <person name="Hunt S."/>
            <person name="Jagels K."/>
            <person name="Lye G."/>
            <person name="Moule S."/>
            <person name="Odell C."/>
            <person name="Pearson D."/>
            <person name="Rajandream M.A."/>
            <person name="Rice P."/>
            <person name="Skelton J."/>
            <person name="Walsh S.V."/>
            <person name="Whitehead S."/>
            <person name="Barrell B.G."/>
        </authorList>
    </citation>
    <scope>NUCLEOTIDE SEQUENCE [LARGE SCALE GENOMIC DNA]</scope>
    <source>
        <strain>ATCC 204508 / S288c</strain>
    </source>
</reference>
<reference key="2">
    <citation type="journal article" date="2014" name="G3 (Bethesda)">
        <title>The reference genome sequence of Saccharomyces cerevisiae: Then and now.</title>
        <authorList>
            <person name="Engel S.R."/>
            <person name="Dietrich F.S."/>
            <person name="Fisk D.G."/>
            <person name="Binkley G."/>
            <person name="Balakrishnan R."/>
            <person name="Costanzo M.C."/>
            <person name="Dwight S.S."/>
            <person name="Hitz B.C."/>
            <person name="Karra K."/>
            <person name="Nash R.S."/>
            <person name="Weng S."/>
            <person name="Wong E.D."/>
            <person name="Lloyd P."/>
            <person name="Skrzypek M.S."/>
            <person name="Miyasato S.R."/>
            <person name="Simison M."/>
            <person name="Cherry J.M."/>
        </authorList>
    </citation>
    <scope>GENOME REANNOTATION</scope>
    <source>
        <strain>ATCC 204508 / S288c</strain>
    </source>
</reference>
<reference key="3">
    <citation type="journal article" date="2007" name="Genome Res.">
        <title>Approaching a complete repository of sequence-verified protein-encoding clones for Saccharomyces cerevisiae.</title>
        <authorList>
            <person name="Hu Y."/>
            <person name="Rolfs A."/>
            <person name="Bhullar B."/>
            <person name="Murthy T.V.S."/>
            <person name="Zhu C."/>
            <person name="Berger M.F."/>
            <person name="Camargo A.A."/>
            <person name="Kelley F."/>
            <person name="McCarron S."/>
            <person name="Jepson D."/>
            <person name="Richardson A."/>
            <person name="Raphael J."/>
            <person name="Moreira D."/>
            <person name="Taycher E."/>
            <person name="Zuo D."/>
            <person name="Mohr S."/>
            <person name="Kane M.F."/>
            <person name="Williamson J."/>
            <person name="Simpson A.J.G."/>
            <person name="Bulyk M.L."/>
            <person name="Harlow E."/>
            <person name="Marsischky G."/>
            <person name="Kolodner R.D."/>
            <person name="LaBaer J."/>
        </authorList>
    </citation>
    <scope>NUCLEOTIDE SEQUENCE [GENOMIC DNA]</scope>
    <source>
        <strain>ATCC 204508 / S288c</strain>
    </source>
</reference>
<reference key="4">
    <citation type="journal article" date="2006" name="Proc. Natl. Acad. Sci. U.S.A.">
        <title>A global topology map of the Saccharomyces cerevisiae membrane proteome.</title>
        <authorList>
            <person name="Kim H."/>
            <person name="Melen K."/>
            <person name="Oesterberg M."/>
            <person name="von Heijne G."/>
        </authorList>
    </citation>
    <scope>TOPOLOGY [LARGE SCALE ANALYSIS]</scope>
    <source>
        <strain>ATCC 208353 / W303-1A</strain>
    </source>
</reference>
<reference key="5">
    <citation type="journal article" date="2009" name="Science">
        <title>Global analysis of Cdk1 substrate phosphorylation sites provides insights into evolution.</title>
        <authorList>
            <person name="Holt L.J."/>
            <person name="Tuch B.B."/>
            <person name="Villen J."/>
            <person name="Johnson A.D."/>
            <person name="Gygi S.P."/>
            <person name="Morgan D.O."/>
        </authorList>
    </citation>
    <scope>PHOSPHORYLATION [LARGE SCALE ANALYSIS] AT SER-425</scope>
    <scope>IDENTIFICATION BY MASS SPECTROMETRY [LARGE SCALE ANALYSIS]</scope>
</reference>
<reference key="6">
    <citation type="journal article" date="2016" name="Eur. J. Cell Biol.">
        <title>The plasma membrane protein Rch1 is a negative regulator of cytosolic calcium homeostasis and positively regulated by the calcium/calcineurin signaling pathway in budding yeast.</title>
        <authorList>
            <person name="Zhao Y."/>
            <person name="Yan H."/>
            <person name="Happeck R."/>
            <person name="Peiter-Volk T."/>
            <person name="Xu H."/>
            <person name="Zhang Y."/>
            <person name="Peiter E."/>
            <person name="van Oostende Triplet C."/>
            <person name="Whiteway M."/>
            <person name="Jiang L."/>
        </authorList>
    </citation>
    <scope>FUNCTION</scope>
    <scope>INDUCTION</scope>
    <scope>SUBCELLULAR LOCATION</scope>
</reference>
<comment type="function">
    <text evidence="2">Solute carrier protein that negatively regulates the cytosolic calcium homeostasis in response to high levels of extracellular calcium.</text>
</comment>
<comment type="subcellular location">
    <subcellularLocation>
        <location evidence="2">Cell membrane</location>
        <topology evidence="1">Multi-pass membrane protein</topology>
    </subcellularLocation>
    <subcellularLocation>
        <location evidence="2">Bud neck</location>
    </subcellularLocation>
    <text evidence="2">Distributes as multiple foci in the plasma membrane prior to cell division, moves toward and concentrates at the bud neck as the bud grows in size, and disperses again along the plasma membrane immediately prior to cytokinesis.</text>
</comment>
<comment type="induction">
    <text evidence="2">Expression is positively regulated by calcium/calcineurin signaling through the sole CDRE element (5'-TTAGCCTC-3') in its promoter.</text>
</comment>
<comment type="similarity">
    <text evidence="4">Belongs to the bile acid:sodium symporter (BASS) (TC 2.A.28) family.</text>
</comment>
<sequence>MKTQYSLIRKIWAHSVTEFLKSQWFFICLAILIVIARFAPNFARDGGLIKGQYSIGYGCVAWIFLQSGLGMKSRSLMANMLNWRAHATILVLSFLITSSIVYGFCCAVKAANDPKIDDWVLIGLILTATCPTTVASNVIMTTNAGGNSLLCVCEVFIGNLLGAFITPALVQMFTNRAPFAYGNPATGNGIGALYGRVMKQVGLSVFVPLFVGQVIQNCFPKGTAYYLGFLKKYHIKIGSYMLLLIMFSSFSTAFYQDAFTSVSHVCIIFLCFFNLGIYIFFTGLSYLCARPWFILKLFPHEPIEGKSTRLYRYSYNIFRPFYYSKEDAICIMFCGPAKTAALGVSLITSQYGDKKEHLGKLLVPLVLYQVEQVMTANFFVSLFKRWIQKDAQADGSESSCANENEEVDLEKIISIGTGENQSVLSNNVPYTQPR</sequence>
<accession>Q05131</accession>
<accession>D6VZK9</accession>